<feature type="initiator methionine" description="Removed" evidence="1">
    <location>
        <position position="1"/>
    </location>
</feature>
<feature type="chain" id="PRO_0000209561" description="Probable tautomerase XF_1725">
    <location>
        <begin position="2"/>
        <end position="82"/>
    </location>
</feature>
<feature type="active site" description="Proton acceptor; via imino nitrogen" evidence="1">
    <location>
        <position position="2"/>
    </location>
</feature>
<organism>
    <name type="scientific">Xylella fastidiosa (strain 9a5c)</name>
    <dbReference type="NCBI Taxonomy" id="160492"/>
    <lineage>
        <taxon>Bacteria</taxon>
        <taxon>Pseudomonadati</taxon>
        <taxon>Pseudomonadota</taxon>
        <taxon>Gammaproteobacteria</taxon>
        <taxon>Lysobacterales</taxon>
        <taxon>Lysobacteraceae</taxon>
        <taxon>Xylella</taxon>
    </lineage>
</organism>
<name>Y1725_XYLFA</name>
<accession>Q9PCQ3</accession>
<reference key="1">
    <citation type="journal article" date="2000" name="Nature">
        <title>The genome sequence of the plant pathogen Xylella fastidiosa.</title>
        <authorList>
            <person name="Simpson A.J.G."/>
            <person name="Reinach F.C."/>
            <person name="Arruda P."/>
            <person name="Abreu F.A."/>
            <person name="Acencio M."/>
            <person name="Alvarenga R."/>
            <person name="Alves L.M.C."/>
            <person name="Araya J.E."/>
            <person name="Baia G.S."/>
            <person name="Baptista C.S."/>
            <person name="Barros M.H."/>
            <person name="Bonaccorsi E.D."/>
            <person name="Bordin S."/>
            <person name="Bove J.M."/>
            <person name="Briones M.R.S."/>
            <person name="Bueno M.R.P."/>
            <person name="Camargo A.A."/>
            <person name="Camargo L.E.A."/>
            <person name="Carraro D.M."/>
            <person name="Carrer H."/>
            <person name="Colauto N.B."/>
            <person name="Colombo C."/>
            <person name="Costa F.F."/>
            <person name="Costa M.C.R."/>
            <person name="Costa-Neto C.M."/>
            <person name="Coutinho L.L."/>
            <person name="Cristofani M."/>
            <person name="Dias-Neto E."/>
            <person name="Docena C."/>
            <person name="El-Dorry H."/>
            <person name="Facincani A.P."/>
            <person name="Ferreira A.J.S."/>
            <person name="Ferreira V.C.A."/>
            <person name="Ferro J.A."/>
            <person name="Fraga J.S."/>
            <person name="Franca S.C."/>
            <person name="Franco M.C."/>
            <person name="Frohme M."/>
            <person name="Furlan L.R."/>
            <person name="Garnier M."/>
            <person name="Goldman G.H."/>
            <person name="Goldman M.H.S."/>
            <person name="Gomes S.L."/>
            <person name="Gruber A."/>
            <person name="Ho P.L."/>
            <person name="Hoheisel J.D."/>
            <person name="Junqueira M.L."/>
            <person name="Kemper E.L."/>
            <person name="Kitajima J.P."/>
            <person name="Krieger J.E."/>
            <person name="Kuramae E.E."/>
            <person name="Laigret F."/>
            <person name="Lambais M.R."/>
            <person name="Leite L.C.C."/>
            <person name="Lemos E.G.M."/>
            <person name="Lemos M.V.F."/>
            <person name="Lopes S.A."/>
            <person name="Lopes C.R."/>
            <person name="Machado J.A."/>
            <person name="Machado M.A."/>
            <person name="Madeira A.M.B.N."/>
            <person name="Madeira H.M.F."/>
            <person name="Marino C.L."/>
            <person name="Marques M.V."/>
            <person name="Martins E.A.L."/>
            <person name="Martins E.M.F."/>
            <person name="Matsukuma A.Y."/>
            <person name="Menck C.F.M."/>
            <person name="Miracca E.C."/>
            <person name="Miyaki C.Y."/>
            <person name="Monteiro-Vitorello C.B."/>
            <person name="Moon D.H."/>
            <person name="Nagai M.A."/>
            <person name="Nascimento A.L.T.O."/>
            <person name="Netto L.E.S."/>
            <person name="Nhani A. Jr."/>
            <person name="Nobrega F.G."/>
            <person name="Nunes L.R."/>
            <person name="Oliveira M.A."/>
            <person name="de Oliveira M.C."/>
            <person name="de Oliveira R.C."/>
            <person name="Palmieri D.A."/>
            <person name="Paris A."/>
            <person name="Peixoto B.R."/>
            <person name="Pereira G.A.G."/>
            <person name="Pereira H.A. Jr."/>
            <person name="Pesquero J.B."/>
            <person name="Quaggio R.B."/>
            <person name="Roberto P.G."/>
            <person name="Rodrigues V."/>
            <person name="de Rosa A.J.M."/>
            <person name="de Rosa V.E. Jr."/>
            <person name="de Sa R.G."/>
            <person name="Santelli R.V."/>
            <person name="Sawasaki H.E."/>
            <person name="da Silva A.C.R."/>
            <person name="da Silva A.M."/>
            <person name="da Silva F.R."/>
            <person name="Silva W.A. Jr."/>
            <person name="da Silveira J.F."/>
            <person name="Silvestri M.L.Z."/>
            <person name="Siqueira W.J."/>
            <person name="de Souza A.A."/>
            <person name="de Souza A.P."/>
            <person name="Terenzi M.F."/>
            <person name="Truffi D."/>
            <person name="Tsai S.M."/>
            <person name="Tsuhako M.H."/>
            <person name="Vallada H."/>
            <person name="Van Sluys M.A."/>
            <person name="Verjovski-Almeida S."/>
            <person name="Vettore A.L."/>
            <person name="Zago M.A."/>
            <person name="Zatz M."/>
            <person name="Meidanis J."/>
            <person name="Setubal J.C."/>
        </authorList>
    </citation>
    <scope>NUCLEOTIDE SEQUENCE [LARGE SCALE GENOMIC DNA]</scope>
    <source>
        <strain>9a5c</strain>
    </source>
</reference>
<evidence type="ECO:0000250" key="1"/>
<evidence type="ECO:0000305" key="2"/>
<gene>
    <name type="ordered locus">XF_1725</name>
</gene>
<proteinExistence type="inferred from homology"/>
<protein>
    <recommendedName>
        <fullName>Probable tautomerase XF_1725</fullName>
        <ecNumber>5.3.2.-</ecNumber>
    </recommendedName>
</protein>
<comment type="similarity">
    <text evidence="2">Belongs to the 4-oxalocrotonate tautomerase family.</text>
</comment>
<sequence length="82" mass="8976">MPHIIVKIAEGRSQPLKQELADRLAATMMDVLGLDSSAVSVAVEDVPMQDWMQQVYGPDIETAGERLLKRPGYGQLASPPEE</sequence>
<dbReference type="EC" id="5.3.2.-"/>
<dbReference type="EMBL" id="AE003849">
    <property type="protein sequence ID" value="AAF84534.1"/>
    <property type="molecule type" value="Genomic_DNA"/>
</dbReference>
<dbReference type="PIR" id="F82644">
    <property type="entry name" value="F82644"/>
</dbReference>
<dbReference type="RefSeq" id="WP_010894196.1">
    <property type="nucleotide sequence ID" value="NC_002488.3"/>
</dbReference>
<dbReference type="SMR" id="Q9PCQ3"/>
<dbReference type="STRING" id="160492.XF_1725"/>
<dbReference type="KEGG" id="xfa:XF_1725"/>
<dbReference type="eggNOG" id="COG1942">
    <property type="taxonomic scope" value="Bacteria"/>
</dbReference>
<dbReference type="HOGENOM" id="CLU_183611_0_0_6"/>
<dbReference type="Proteomes" id="UP000000812">
    <property type="component" value="Chromosome"/>
</dbReference>
<dbReference type="GO" id="GO:0005737">
    <property type="term" value="C:cytoplasm"/>
    <property type="evidence" value="ECO:0007669"/>
    <property type="project" value="InterPro"/>
</dbReference>
<dbReference type="GO" id="GO:0016862">
    <property type="term" value="F:intramolecular oxidoreductase activity, interconverting keto- and enol-groups"/>
    <property type="evidence" value="ECO:0007669"/>
    <property type="project" value="InterPro"/>
</dbReference>
<dbReference type="Gene3D" id="3.30.429.10">
    <property type="entry name" value="Macrophage Migration Inhibitory Factor"/>
    <property type="match status" value="1"/>
</dbReference>
<dbReference type="InterPro" id="IPR004370">
    <property type="entry name" value="4-OT-like_dom"/>
</dbReference>
<dbReference type="InterPro" id="IPR014347">
    <property type="entry name" value="Tautomerase/MIF_sf"/>
</dbReference>
<dbReference type="InterPro" id="IPR017284">
    <property type="entry name" value="Tautomerase_PptA"/>
</dbReference>
<dbReference type="Pfam" id="PF01361">
    <property type="entry name" value="Tautomerase"/>
    <property type="match status" value="1"/>
</dbReference>
<dbReference type="PIRSF" id="PIRSF037799">
    <property type="entry name" value="Tautomer_YdcE_prd"/>
    <property type="match status" value="1"/>
</dbReference>
<dbReference type="SUPFAM" id="SSF55331">
    <property type="entry name" value="Tautomerase/MIF"/>
    <property type="match status" value="1"/>
</dbReference>
<keyword id="KW-0413">Isomerase</keyword>